<dbReference type="EC" id="3.5.2.3" evidence="1"/>
<dbReference type="EMBL" id="BA000038">
    <property type="protein sequence ID" value="BAC96433.1"/>
    <property type="status" value="ALT_INIT"/>
    <property type="molecule type" value="Genomic_DNA"/>
</dbReference>
<dbReference type="RefSeq" id="WP_043877470.1">
    <property type="nucleotide sequence ID" value="NC_005140.1"/>
</dbReference>
<dbReference type="SMR" id="Q7MFB3"/>
<dbReference type="STRING" id="672.VV93_v1c33940"/>
<dbReference type="KEGG" id="vvy:VVA0407"/>
<dbReference type="PATRIC" id="fig|196600.6.peg.3613"/>
<dbReference type="eggNOG" id="COG0418">
    <property type="taxonomic scope" value="Bacteria"/>
</dbReference>
<dbReference type="HOGENOM" id="CLU_041558_1_0_6"/>
<dbReference type="UniPathway" id="UPA00070">
    <property type="reaction ID" value="UER00117"/>
</dbReference>
<dbReference type="Proteomes" id="UP000002675">
    <property type="component" value="Chromosome II"/>
</dbReference>
<dbReference type="GO" id="GO:0005829">
    <property type="term" value="C:cytosol"/>
    <property type="evidence" value="ECO:0007669"/>
    <property type="project" value="TreeGrafter"/>
</dbReference>
<dbReference type="GO" id="GO:0004151">
    <property type="term" value="F:dihydroorotase activity"/>
    <property type="evidence" value="ECO:0007669"/>
    <property type="project" value="UniProtKB-UniRule"/>
</dbReference>
<dbReference type="GO" id="GO:0008270">
    <property type="term" value="F:zinc ion binding"/>
    <property type="evidence" value="ECO:0007669"/>
    <property type="project" value="UniProtKB-UniRule"/>
</dbReference>
<dbReference type="GO" id="GO:0006207">
    <property type="term" value="P:'de novo' pyrimidine nucleobase biosynthetic process"/>
    <property type="evidence" value="ECO:0007669"/>
    <property type="project" value="TreeGrafter"/>
</dbReference>
<dbReference type="GO" id="GO:0044205">
    <property type="term" value="P:'de novo' UMP biosynthetic process"/>
    <property type="evidence" value="ECO:0007669"/>
    <property type="project" value="UniProtKB-UniRule"/>
</dbReference>
<dbReference type="CDD" id="cd01294">
    <property type="entry name" value="DHOase"/>
    <property type="match status" value="1"/>
</dbReference>
<dbReference type="FunFam" id="3.20.20.140:FF:000006">
    <property type="entry name" value="Dihydroorotase"/>
    <property type="match status" value="1"/>
</dbReference>
<dbReference type="Gene3D" id="3.20.20.140">
    <property type="entry name" value="Metal-dependent hydrolases"/>
    <property type="match status" value="1"/>
</dbReference>
<dbReference type="HAMAP" id="MF_00219">
    <property type="entry name" value="PyrC_classII"/>
    <property type="match status" value="1"/>
</dbReference>
<dbReference type="InterPro" id="IPR006680">
    <property type="entry name" value="Amidohydro-rel"/>
</dbReference>
<dbReference type="InterPro" id="IPR004721">
    <property type="entry name" value="DHOdimr"/>
</dbReference>
<dbReference type="InterPro" id="IPR002195">
    <property type="entry name" value="Dihydroorotase_CS"/>
</dbReference>
<dbReference type="InterPro" id="IPR032466">
    <property type="entry name" value="Metal_Hydrolase"/>
</dbReference>
<dbReference type="NCBIfam" id="TIGR00856">
    <property type="entry name" value="pyrC_dimer"/>
    <property type="match status" value="1"/>
</dbReference>
<dbReference type="PANTHER" id="PTHR43137">
    <property type="entry name" value="DIHYDROOROTASE"/>
    <property type="match status" value="1"/>
</dbReference>
<dbReference type="PANTHER" id="PTHR43137:SF1">
    <property type="entry name" value="DIHYDROOROTASE"/>
    <property type="match status" value="1"/>
</dbReference>
<dbReference type="Pfam" id="PF01979">
    <property type="entry name" value="Amidohydro_1"/>
    <property type="match status" value="1"/>
</dbReference>
<dbReference type="PIRSF" id="PIRSF001237">
    <property type="entry name" value="DHOdimr"/>
    <property type="match status" value="1"/>
</dbReference>
<dbReference type="SUPFAM" id="SSF51556">
    <property type="entry name" value="Metallo-dependent hydrolases"/>
    <property type="match status" value="1"/>
</dbReference>
<dbReference type="PROSITE" id="PS00482">
    <property type="entry name" value="DIHYDROOROTASE_1"/>
    <property type="match status" value="1"/>
</dbReference>
<dbReference type="PROSITE" id="PS00483">
    <property type="entry name" value="DIHYDROOROTASE_2"/>
    <property type="match status" value="1"/>
</dbReference>
<protein>
    <recommendedName>
        <fullName evidence="1">Dihydroorotase</fullName>
        <shortName evidence="1">DHOase</shortName>
        <ecNumber evidence="1">3.5.2.3</ecNumber>
    </recommendedName>
</protein>
<sequence length="342" mass="37477">MTTLTITRPDDWHVHLRDGEVLADTVRDISRYNGRALIMPNTVPPVTTTEMALAYRDRIQAHNQTEQFSPLMSLYLTDNTTADEVRKAKASGAVVAAKLYPAGATTNSDSGVTDVKKIYPVLQAMQEVGMLLLVHGEVTTHDVDIFDREKTFLDNVLAPIVQDFPDLKIVLEHITTSDAVVFVKNANENVAATITAHHLLYNRNHMLVGGIKPHFYCLPILKRNTHQLALISAATSGNKKFFLGTDSAPHAKGAKESACGCAGSYTAHAALELYAEVFEQAGKLENLEAFASHNGPDFYGLPRNQDTITLVKDAWPVPASMPFGGDIVVPIRAGENMEWKVK</sequence>
<organism>
    <name type="scientific">Vibrio vulnificus (strain YJ016)</name>
    <dbReference type="NCBI Taxonomy" id="196600"/>
    <lineage>
        <taxon>Bacteria</taxon>
        <taxon>Pseudomonadati</taxon>
        <taxon>Pseudomonadota</taxon>
        <taxon>Gammaproteobacteria</taxon>
        <taxon>Vibrionales</taxon>
        <taxon>Vibrionaceae</taxon>
        <taxon>Vibrio</taxon>
    </lineage>
</organism>
<gene>
    <name evidence="1" type="primary">pyrC</name>
    <name type="ordered locus">VVA0407</name>
</gene>
<proteinExistence type="inferred from homology"/>
<name>PYRC_VIBVY</name>
<accession>Q7MFB3</accession>
<feature type="chain" id="PRO_0000147224" description="Dihydroorotase">
    <location>
        <begin position="1"/>
        <end position="342"/>
    </location>
</feature>
<feature type="active site" evidence="1">
    <location>
        <position position="246"/>
    </location>
</feature>
<feature type="binding site" evidence="1">
    <location>
        <position position="13"/>
    </location>
    <ligand>
        <name>Zn(2+)</name>
        <dbReference type="ChEBI" id="CHEBI:29105"/>
        <label>1</label>
    </ligand>
</feature>
<feature type="binding site" evidence="1">
    <location>
        <begin position="15"/>
        <end position="17"/>
    </location>
    <ligand>
        <name>substrate</name>
    </ligand>
</feature>
<feature type="binding site" evidence="1">
    <location>
        <position position="15"/>
    </location>
    <ligand>
        <name>Zn(2+)</name>
        <dbReference type="ChEBI" id="CHEBI:29105"/>
        <label>1</label>
    </ligand>
</feature>
<feature type="binding site" evidence="1">
    <location>
        <position position="41"/>
    </location>
    <ligand>
        <name>substrate</name>
    </ligand>
</feature>
<feature type="binding site" description="via carbamate group" evidence="1">
    <location>
        <position position="98"/>
    </location>
    <ligand>
        <name>Zn(2+)</name>
        <dbReference type="ChEBI" id="CHEBI:29105"/>
        <label>1</label>
    </ligand>
</feature>
<feature type="binding site" description="via carbamate group" evidence="1">
    <location>
        <position position="98"/>
    </location>
    <ligand>
        <name>Zn(2+)</name>
        <dbReference type="ChEBI" id="CHEBI:29105"/>
        <label>2</label>
    </ligand>
</feature>
<feature type="binding site" evidence="1">
    <location>
        <position position="135"/>
    </location>
    <ligand>
        <name>substrate</name>
    </ligand>
</feature>
<feature type="binding site" evidence="1">
    <location>
        <position position="135"/>
    </location>
    <ligand>
        <name>Zn(2+)</name>
        <dbReference type="ChEBI" id="CHEBI:29105"/>
        <label>2</label>
    </ligand>
</feature>
<feature type="binding site" evidence="1">
    <location>
        <position position="173"/>
    </location>
    <ligand>
        <name>Zn(2+)</name>
        <dbReference type="ChEBI" id="CHEBI:29105"/>
        <label>2</label>
    </ligand>
</feature>
<feature type="binding site" evidence="1">
    <location>
        <position position="218"/>
    </location>
    <ligand>
        <name>substrate</name>
    </ligand>
</feature>
<feature type="binding site" evidence="1">
    <location>
        <position position="246"/>
    </location>
    <ligand>
        <name>Zn(2+)</name>
        <dbReference type="ChEBI" id="CHEBI:29105"/>
        <label>1</label>
    </ligand>
</feature>
<feature type="binding site" evidence="1">
    <location>
        <position position="250"/>
    </location>
    <ligand>
        <name>substrate</name>
    </ligand>
</feature>
<feature type="binding site" evidence="1">
    <location>
        <position position="262"/>
    </location>
    <ligand>
        <name>substrate</name>
    </ligand>
</feature>
<feature type="modified residue" description="N6-carboxylysine" evidence="1">
    <location>
        <position position="98"/>
    </location>
</feature>
<comment type="function">
    <text evidence="1">Catalyzes the reversible cyclization of carbamoyl aspartate to dihydroorotate.</text>
</comment>
<comment type="catalytic activity">
    <reaction evidence="1">
        <text>(S)-dihydroorotate + H2O = N-carbamoyl-L-aspartate + H(+)</text>
        <dbReference type="Rhea" id="RHEA:24296"/>
        <dbReference type="ChEBI" id="CHEBI:15377"/>
        <dbReference type="ChEBI" id="CHEBI:15378"/>
        <dbReference type="ChEBI" id="CHEBI:30864"/>
        <dbReference type="ChEBI" id="CHEBI:32814"/>
        <dbReference type="EC" id="3.5.2.3"/>
    </reaction>
</comment>
<comment type="cofactor">
    <cofactor evidence="1">
        <name>Zn(2+)</name>
        <dbReference type="ChEBI" id="CHEBI:29105"/>
    </cofactor>
    <text evidence="1">Binds 2 Zn(2+) ions per subunit.</text>
</comment>
<comment type="pathway">
    <text evidence="1">Pyrimidine metabolism; UMP biosynthesis via de novo pathway; (S)-dihydroorotate from bicarbonate: step 3/3.</text>
</comment>
<comment type="subunit">
    <text evidence="1">Homodimer.</text>
</comment>
<comment type="similarity">
    <text evidence="1">Belongs to the metallo-dependent hydrolases superfamily. DHOase family. Class II DHOase subfamily.</text>
</comment>
<comment type="sequence caution" evidence="2">
    <conflict type="erroneous initiation">
        <sequence resource="EMBL-CDS" id="BAC96433"/>
    </conflict>
</comment>
<keyword id="KW-0378">Hydrolase</keyword>
<keyword id="KW-0479">Metal-binding</keyword>
<keyword id="KW-0665">Pyrimidine biosynthesis</keyword>
<keyword id="KW-0862">Zinc</keyword>
<evidence type="ECO:0000255" key="1">
    <source>
        <dbReference type="HAMAP-Rule" id="MF_00219"/>
    </source>
</evidence>
<evidence type="ECO:0000305" key="2"/>
<reference key="1">
    <citation type="journal article" date="2003" name="Genome Res.">
        <title>Comparative genome analysis of Vibrio vulnificus, a marine pathogen.</title>
        <authorList>
            <person name="Chen C.-Y."/>
            <person name="Wu K.-M."/>
            <person name="Chang Y.-C."/>
            <person name="Chang C.-H."/>
            <person name="Tsai H.-C."/>
            <person name="Liao T.-L."/>
            <person name="Liu Y.-M."/>
            <person name="Chen H.-J."/>
            <person name="Shen A.B.-T."/>
            <person name="Li J.-C."/>
            <person name="Su T.-L."/>
            <person name="Shao C.-P."/>
            <person name="Lee C.-T."/>
            <person name="Hor L.-I."/>
            <person name="Tsai S.-F."/>
        </authorList>
    </citation>
    <scope>NUCLEOTIDE SEQUENCE [LARGE SCALE GENOMIC DNA]</scope>
    <source>
        <strain>YJ016</strain>
    </source>
</reference>